<protein>
    <recommendedName>
        <fullName>Pentatricopeptide repeat-containing protein At5g66631</fullName>
    </recommendedName>
</protein>
<proteinExistence type="evidence at transcript level"/>
<accession>B3H4P1</accession>
<feature type="chain" id="PRO_0000363587" description="Pentatricopeptide repeat-containing protein At5g66631">
    <location>
        <begin position="1"/>
        <end position="661"/>
    </location>
</feature>
<feature type="repeat" description="PPR 1">
    <location>
        <begin position="139"/>
        <end position="173"/>
    </location>
</feature>
<feature type="repeat" description="PPR 2">
    <location>
        <begin position="176"/>
        <end position="210"/>
    </location>
</feature>
<feature type="repeat" description="PPR 3">
    <location>
        <begin position="211"/>
        <end position="245"/>
    </location>
</feature>
<feature type="repeat" description="PPR 4">
    <location>
        <begin position="246"/>
        <end position="280"/>
    </location>
</feature>
<feature type="repeat" description="PPR 5">
    <location>
        <begin position="410"/>
        <end position="444"/>
    </location>
</feature>
<feature type="repeat" description="PPR 6">
    <location>
        <begin position="445"/>
        <end position="475"/>
    </location>
</feature>
<feature type="repeat" description="PPR 7">
    <location>
        <begin position="484"/>
        <end position="518"/>
    </location>
</feature>
<feature type="repeat" description="PPR 8">
    <location>
        <begin position="519"/>
        <end position="553"/>
    </location>
</feature>
<feature type="repeat" description="PPR 9">
    <location>
        <begin position="554"/>
        <end position="588"/>
    </location>
</feature>
<name>PP450_ARATH</name>
<keyword id="KW-1185">Reference proteome</keyword>
<keyword id="KW-0677">Repeat</keyword>
<organism>
    <name type="scientific">Arabidopsis thaliana</name>
    <name type="common">Mouse-ear cress</name>
    <dbReference type="NCBI Taxonomy" id="3702"/>
    <lineage>
        <taxon>Eukaryota</taxon>
        <taxon>Viridiplantae</taxon>
        <taxon>Streptophyta</taxon>
        <taxon>Embryophyta</taxon>
        <taxon>Tracheophyta</taxon>
        <taxon>Spermatophyta</taxon>
        <taxon>Magnoliopsida</taxon>
        <taxon>eudicotyledons</taxon>
        <taxon>Gunneridae</taxon>
        <taxon>Pentapetalae</taxon>
        <taxon>rosids</taxon>
        <taxon>malvids</taxon>
        <taxon>Brassicales</taxon>
        <taxon>Brassicaceae</taxon>
        <taxon>Camelineae</taxon>
        <taxon>Arabidopsis</taxon>
    </lineage>
</organism>
<dbReference type="EMBL" id="AB018119">
    <property type="status" value="NOT_ANNOTATED_CDS"/>
    <property type="molecule type" value="Genomic_DNA"/>
</dbReference>
<dbReference type="EMBL" id="CP002688">
    <property type="protein sequence ID" value="AED98242.1"/>
    <property type="molecule type" value="Genomic_DNA"/>
</dbReference>
<dbReference type="RefSeq" id="NP_001119513.1">
    <property type="nucleotide sequence ID" value="NM_001126041.2"/>
</dbReference>
<dbReference type="SMR" id="B3H4P1"/>
<dbReference type="BioGRID" id="926961">
    <property type="interactions" value="1"/>
</dbReference>
<dbReference type="FunCoup" id="B3H4P1">
    <property type="interactions" value="460"/>
</dbReference>
<dbReference type="STRING" id="3702.B3H4P1"/>
<dbReference type="iPTMnet" id="B3H4P1"/>
<dbReference type="PaxDb" id="3702-AT5G66631.1"/>
<dbReference type="ProteomicsDB" id="249331"/>
<dbReference type="EnsemblPlants" id="AT5G66631.1">
    <property type="protein sequence ID" value="AT5G66631.1"/>
    <property type="gene ID" value="AT5G66631"/>
</dbReference>
<dbReference type="GeneID" id="6240924"/>
<dbReference type="Gramene" id="AT5G66631.1">
    <property type="protein sequence ID" value="AT5G66631.1"/>
    <property type="gene ID" value="AT5G66631"/>
</dbReference>
<dbReference type="KEGG" id="ath:AT5G66631"/>
<dbReference type="Araport" id="AT5G66631"/>
<dbReference type="TAIR" id="AT5G66631"/>
<dbReference type="eggNOG" id="KOG4197">
    <property type="taxonomic scope" value="Eukaryota"/>
</dbReference>
<dbReference type="HOGENOM" id="CLU_028150_1_0_1"/>
<dbReference type="InParanoid" id="B3H4P1"/>
<dbReference type="OMA" id="HIWTVSS"/>
<dbReference type="PhylomeDB" id="B3H4P1"/>
<dbReference type="PRO" id="PR:B3H4P1"/>
<dbReference type="Proteomes" id="UP000006548">
    <property type="component" value="Chromosome 5"/>
</dbReference>
<dbReference type="ExpressionAtlas" id="B3H4P1">
    <property type="expression patterns" value="baseline and differential"/>
</dbReference>
<dbReference type="Gene3D" id="1.25.40.10">
    <property type="entry name" value="Tetratricopeptide repeat domain"/>
    <property type="match status" value="3"/>
</dbReference>
<dbReference type="InterPro" id="IPR044175">
    <property type="entry name" value="At5g66631-like"/>
</dbReference>
<dbReference type="InterPro" id="IPR002885">
    <property type="entry name" value="Pentatricopeptide_rpt"/>
</dbReference>
<dbReference type="InterPro" id="IPR011990">
    <property type="entry name" value="TPR-like_helical_dom_sf"/>
</dbReference>
<dbReference type="PANTHER" id="PTHR47913">
    <property type="entry name" value="OS01G0167750 PROTEIN"/>
    <property type="match status" value="1"/>
</dbReference>
<dbReference type="PANTHER" id="PTHR47913:SF1">
    <property type="entry name" value="OS01G0167750 PROTEIN"/>
    <property type="match status" value="1"/>
</dbReference>
<dbReference type="Pfam" id="PF01535">
    <property type="entry name" value="PPR"/>
    <property type="match status" value="2"/>
</dbReference>
<dbReference type="Pfam" id="PF13041">
    <property type="entry name" value="PPR_2"/>
    <property type="match status" value="1"/>
</dbReference>
<dbReference type="PROSITE" id="PS51375">
    <property type="entry name" value="PPR"/>
    <property type="match status" value="8"/>
</dbReference>
<sequence length="661" mass="76174">MFSIIFSNPVKPFNSVIIHQIRFFSRDPFPNKVQHYLYRANLIDSIRLSLRSPTTSDRTLASLLNHRLLDSFVVKNALRSSPSVSSAWSIFKTLSHKSPRFSFETETLHAFATVLAKFQRSSELNSLIGVVNAWKFRNVHFSFMNLLNLYATAGDFDSVLKTWDEYRCSGEEKKGCTESYNIVMQVYMTLGKDSEAVQTFDQIINEGGIPNSRTFTIMIEHLVKLGNLDAAMKIFETLPLMRITRTLKHYSVLVEAFVDAQRFDEVKTLIAEMKSDGKFPSRRMLEPLKRMREAGFEHETEEFLREMLPDERIKDISMYSMDNPSDSEDEGDEYKDDVNEAQVKLKPWLDPKALATSLKKWSSDAVTALEEANFVWTNLLVCKMLRNFRAPETAWSFFCWVAIQPGFTHDAYTIERMMAMLARNGQVELVDKLISKVRIEGIKLPFSTIRLIIDLYGISKKPEAAIKVFNEDRTLCGSISDFNLMLLYSSLLRTLTKCKRNAEALETLEDMMLTGVSPDIQTFSGLMYHFALQGEIQTVERLFSMVRQIGLEPDPYMLKLLVQAYCRCERSVLAYRVFQDMKDSNLMPDRETKELLVKSLWREEKRKEAAAVEESYEEENDNKNSSNVLRLALKGHVWTISSTDISRVYNLYRDCVLKTST</sequence>
<reference key="1">
    <citation type="journal article" date="2000" name="DNA Res.">
        <title>Structural analysis of Arabidopsis thaliana chromosome 5. X. Sequence features of the regions of 3,076,755 bp covered by sixty P1 and TAC clones.</title>
        <authorList>
            <person name="Sato S."/>
            <person name="Nakamura Y."/>
            <person name="Kaneko T."/>
            <person name="Katoh T."/>
            <person name="Asamizu E."/>
            <person name="Kotani H."/>
            <person name="Tabata S."/>
        </authorList>
    </citation>
    <scope>NUCLEOTIDE SEQUENCE [LARGE SCALE GENOMIC DNA]</scope>
    <source>
        <strain>cv. Columbia</strain>
    </source>
</reference>
<reference key="2">
    <citation type="journal article" date="2017" name="Plant J.">
        <title>Araport11: a complete reannotation of the Arabidopsis thaliana reference genome.</title>
        <authorList>
            <person name="Cheng C.Y."/>
            <person name="Krishnakumar V."/>
            <person name="Chan A.P."/>
            <person name="Thibaud-Nissen F."/>
            <person name="Schobel S."/>
            <person name="Town C.D."/>
        </authorList>
    </citation>
    <scope>GENOME REANNOTATION</scope>
    <source>
        <strain>cv. Columbia</strain>
    </source>
</reference>
<reference key="3">
    <citation type="journal article" date="2004" name="Plant Cell">
        <title>Genome-wide analysis of Arabidopsis pentatricopeptide repeat proteins reveals their essential role in organelle biogenesis.</title>
        <authorList>
            <person name="Lurin C."/>
            <person name="Andres C."/>
            <person name="Aubourg S."/>
            <person name="Bellaoui M."/>
            <person name="Bitton F."/>
            <person name="Bruyere C."/>
            <person name="Caboche M."/>
            <person name="Debast C."/>
            <person name="Gualberto J."/>
            <person name="Hoffmann B."/>
            <person name="Lecharny A."/>
            <person name="Le Ret M."/>
            <person name="Martin-Magniette M.-L."/>
            <person name="Mireau H."/>
            <person name="Peeters N."/>
            <person name="Renou J.-P."/>
            <person name="Szurek B."/>
            <person name="Taconnat L."/>
            <person name="Small I."/>
        </authorList>
    </citation>
    <scope>GENE FAMILY</scope>
</reference>
<comment type="similarity">
    <text evidence="1">Belongs to the PPR family. P subfamily.</text>
</comment>
<comment type="online information" name="Pentatricopeptide repeat proteins">
    <link uri="https://ppr.plantenergy.uwa.edu.au"/>
</comment>
<evidence type="ECO:0000305" key="1"/>
<gene>
    <name type="ordered locus">At5g66631</name>
    <name type="ORF">MSN2</name>
</gene>